<sequence length="397" mass="43435">MGKEKFERTKPHVNIGTIGHIDHGKTTLTAAITKIASLKMGSKAVAYDEIDKAPEEKERGITIATAHVEYETTLRHYAHVDCPGHADYIKNMITGAAQMDGAIIVVAATDGPMPQTREHILLARQVGVPSIVVFLNKCDMVDDEELLELVELEVRELLSSYDFPGDDTPVIRGSALKALECDSADDDAAKPILELLDACDSYIPEPERDTDKPFLMPIEDVFSISGRGTVVTGRVERGIIKVGEQIEIVGIKDTMTTTCTGVEMFRKLLDQGQAGDNVGVLLRGVKRDDVERGQVLAAPKSITPHKKFKAEVYVLSKEEGGRHTPFFSGYRPQFYFRTTDITGIIGLEEGVEMVMPGDNATFIVELIHPVAMEQGLRFAIREGGRTVGAGVVSEILE</sequence>
<comment type="function">
    <text evidence="2">GTP hydrolase that promotes the GTP-dependent binding of aminoacyl-tRNA to the A-site of ribosomes during protein biosynthesis.</text>
</comment>
<comment type="catalytic activity">
    <reaction evidence="2">
        <text>GTP + H2O = GDP + phosphate + H(+)</text>
        <dbReference type="Rhea" id="RHEA:19669"/>
        <dbReference type="ChEBI" id="CHEBI:15377"/>
        <dbReference type="ChEBI" id="CHEBI:15378"/>
        <dbReference type="ChEBI" id="CHEBI:37565"/>
        <dbReference type="ChEBI" id="CHEBI:43474"/>
        <dbReference type="ChEBI" id="CHEBI:58189"/>
        <dbReference type="EC" id="3.6.5.3"/>
    </reaction>
    <physiologicalReaction direction="left-to-right" evidence="2">
        <dbReference type="Rhea" id="RHEA:19670"/>
    </physiologicalReaction>
</comment>
<comment type="subunit">
    <text evidence="2">Monomer.</text>
</comment>
<comment type="subcellular location">
    <subcellularLocation>
        <location evidence="2">Cytoplasm</location>
    </subcellularLocation>
</comment>
<comment type="similarity">
    <text evidence="2">Belongs to the TRAFAC class translation factor GTPase superfamily. Classic translation factor GTPase family. EF-Tu/EF-1A subfamily.</text>
</comment>
<name>EFTU_OLEA2</name>
<evidence type="ECO:0000250" key="1"/>
<evidence type="ECO:0000255" key="2">
    <source>
        <dbReference type="HAMAP-Rule" id="MF_00118"/>
    </source>
</evidence>
<keyword id="KW-0963">Cytoplasm</keyword>
<keyword id="KW-0251">Elongation factor</keyword>
<keyword id="KW-0342">GTP-binding</keyword>
<keyword id="KW-0378">Hydrolase</keyword>
<keyword id="KW-0460">Magnesium</keyword>
<keyword id="KW-0479">Metal-binding</keyword>
<keyword id="KW-0547">Nucleotide-binding</keyword>
<keyword id="KW-0648">Protein biosynthesis</keyword>
<keyword id="KW-1185">Reference proteome</keyword>
<proteinExistence type="inferred from homology"/>
<gene>
    <name evidence="2" type="primary">tuf</name>
    <name type="ordered locus">Dde_2989</name>
</gene>
<dbReference type="EC" id="3.6.5.3" evidence="2"/>
<dbReference type="EMBL" id="CP000112">
    <property type="protein sequence ID" value="ABB39783.1"/>
    <property type="molecule type" value="Genomic_DNA"/>
</dbReference>
<dbReference type="RefSeq" id="WP_011368756.1">
    <property type="nucleotide sequence ID" value="NC_007519.1"/>
</dbReference>
<dbReference type="SMR" id="Q30X13"/>
<dbReference type="STRING" id="207559.Dde_2989"/>
<dbReference type="KEGG" id="dde:Dde_2989"/>
<dbReference type="eggNOG" id="COG0050">
    <property type="taxonomic scope" value="Bacteria"/>
</dbReference>
<dbReference type="HOGENOM" id="CLU_007265_0_1_7"/>
<dbReference type="Proteomes" id="UP000002710">
    <property type="component" value="Chromosome"/>
</dbReference>
<dbReference type="GO" id="GO:0005829">
    <property type="term" value="C:cytosol"/>
    <property type="evidence" value="ECO:0007669"/>
    <property type="project" value="TreeGrafter"/>
</dbReference>
<dbReference type="GO" id="GO:0005525">
    <property type="term" value="F:GTP binding"/>
    <property type="evidence" value="ECO:0007669"/>
    <property type="project" value="UniProtKB-UniRule"/>
</dbReference>
<dbReference type="GO" id="GO:0003924">
    <property type="term" value="F:GTPase activity"/>
    <property type="evidence" value="ECO:0007669"/>
    <property type="project" value="InterPro"/>
</dbReference>
<dbReference type="GO" id="GO:0003746">
    <property type="term" value="F:translation elongation factor activity"/>
    <property type="evidence" value="ECO:0007669"/>
    <property type="project" value="UniProtKB-UniRule"/>
</dbReference>
<dbReference type="CDD" id="cd01884">
    <property type="entry name" value="EF_Tu"/>
    <property type="match status" value="1"/>
</dbReference>
<dbReference type="CDD" id="cd03697">
    <property type="entry name" value="EFTU_II"/>
    <property type="match status" value="1"/>
</dbReference>
<dbReference type="CDD" id="cd03707">
    <property type="entry name" value="EFTU_III"/>
    <property type="match status" value="1"/>
</dbReference>
<dbReference type="FunFam" id="2.40.30.10:FF:000001">
    <property type="entry name" value="Elongation factor Tu"/>
    <property type="match status" value="1"/>
</dbReference>
<dbReference type="FunFam" id="3.40.50.300:FF:000003">
    <property type="entry name" value="Elongation factor Tu"/>
    <property type="match status" value="1"/>
</dbReference>
<dbReference type="Gene3D" id="3.40.50.300">
    <property type="entry name" value="P-loop containing nucleotide triphosphate hydrolases"/>
    <property type="match status" value="1"/>
</dbReference>
<dbReference type="Gene3D" id="2.40.30.10">
    <property type="entry name" value="Translation factors"/>
    <property type="match status" value="2"/>
</dbReference>
<dbReference type="HAMAP" id="MF_00118_B">
    <property type="entry name" value="EF_Tu_B"/>
    <property type="match status" value="1"/>
</dbReference>
<dbReference type="InterPro" id="IPR041709">
    <property type="entry name" value="EF-Tu_GTP-bd"/>
</dbReference>
<dbReference type="InterPro" id="IPR050055">
    <property type="entry name" value="EF-Tu_GTPase"/>
</dbReference>
<dbReference type="InterPro" id="IPR004161">
    <property type="entry name" value="EFTu-like_2"/>
</dbReference>
<dbReference type="InterPro" id="IPR033720">
    <property type="entry name" value="EFTU_2"/>
</dbReference>
<dbReference type="InterPro" id="IPR031157">
    <property type="entry name" value="G_TR_CS"/>
</dbReference>
<dbReference type="InterPro" id="IPR027417">
    <property type="entry name" value="P-loop_NTPase"/>
</dbReference>
<dbReference type="InterPro" id="IPR005225">
    <property type="entry name" value="Small_GTP-bd"/>
</dbReference>
<dbReference type="InterPro" id="IPR000795">
    <property type="entry name" value="T_Tr_GTP-bd_dom"/>
</dbReference>
<dbReference type="InterPro" id="IPR009000">
    <property type="entry name" value="Transl_B-barrel_sf"/>
</dbReference>
<dbReference type="InterPro" id="IPR009001">
    <property type="entry name" value="Transl_elong_EF1A/Init_IF2_C"/>
</dbReference>
<dbReference type="InterPro" id="IPR004541">
    <property type="entry name" value="Transl_elong_EFTu/EF1A_bac/org"/>
</dbReference>
<dbReference type="InterPro" id="IPR004160">
    <property type="entry name" value="Transl_elong_EFTu/EF1A_C"/>
</dbReference>
<dbReference type="NCBIfam" id="TIGR00485">
    <property type="entry name" value="EF-Tu"/>
    <property type="match status" value="1"/>
</dbReference>
<dbReference type="NCBIfam" id="NF000766">
    <property type="entry name" value="PRK00049.1"/>
    <property type="match status" value="1"/>
</dbReference>
<dbReference type="NCBIfam" id="NF009372">
    <property type="entry name" value="PRK12735.1"/>
    <property type="match status" value="1"/>
</dbReference>
<dbReference type="NCBIfam" id="NF009373">
    <property type="entry name" value="PRK12736.1"/>
    <property type="match status" value="1"/>
</dbReference>
<dbReference type="NCBIfam" id="TIGR00231">
    <property type="entry name" value="small_GTP"/>
    <property type="match status" value="1"/>
</dbReference>
<dbReference type="PANTHER" id="PTHR43721:SF22">
    <property type="entry name" value="ELONGATION FACTOR TU, MITOCHONDRIAL"/>
    <property type="match status" value="1"/>
</dbReference>
<dbReference type="PANTHER" id="PTHR43721">
    <property type="entry name" value="ELONGATION FACTOR TU-RELATED"/>
    <property type="match status" value="1"/>
</dbReference>
<dbReference type="Pfam" id="PF00009">
    <property type="entry name" value="GTP_EFTU"/>
    <property type="match status" value="1"/>
</dbReference>
<dbReference type="Pfam" id="PF03144">
    <property type="entry name" value="GTP_EFTU_D2"/>
    <property type="match status" value="1"/>
</dbReference>
<dbReference type="Pfam" id="PF03143">
    <property type="entry name" value="GTP_EFTU_D3"/>
    <property type="match status" value="1"/>
</dbReference>
<dbReference type="PRINTS" id="PR00315">
    <property type="entry name" value="ELONGATNFCT"/>
</dbReference>
<dbReference type="SUPFAM" id="SSF50465">
    <property type="entry name" value="EF-Tu/eEF-1alpha/eIF2-gamma C-terminal domain"/>
    <property type="match status" value="1"/>
</dbReference>
<dbReference type="SUPFAM" id="SSF52540">
    <property type="entry name" value="P-loop containing nucleoside triphosphate hydrolases"/>
    <property type="match status" value="1"/>
</dbReference>
<dbReference type="SUPFAM" id="SSF50447">
    <property type="entry name" value="Translation proteins"/>
    <property type="match status" value="1"/>
</dbReference>
<dbReference type="PROSITE" id="PS00301">
    <property type="entry name" value="G_TR_1"/>
    <property type="match status" value="1"/>
</dbReference>
<dbReference type="PROSITE" id="PS51722">
    <property type="entry name" value="G_TR_2"/>
    <property type="match status" value="1"/>
</dbReference>
<protein>
    <recommendedName>
        <fullName evidence="2">Elongation factor Tu</fullName>
        <shortName evidence="2">EF-Tu</shortName>
        <ecNumber evidence="2">3.6.5.3</ecNumber>
    </recommendedName>
</protein>
<accession>Q30X13</accession>
<organism>
    <name type="scientific">Oleidesulfovibrio alaskensis (strain ATCC BAA-1058 / DSM 17464 / G20)</name>
    <name type="common">Desulfovibrio alaskensis</name>
    <dbReference type="NCBI Taxonomy" id="207559"/>
    <lineage>
        <taxon>Bacteria</taxon>
        <taxon>Pseudomonadati</taxon>
        <taxon>Thermodesulfobacteriota</taxon>
        <taxon>Desulfovibrionia</taxon>
        <taxon>Desulfovibrionales</taxon>
        <taxon>Desulfovibrionaceae</taxon>
        <taxon>Oleidesulfovibrio</taxon>
    </lineage>
</organism>
<feature type="chain" id="PRO_1000015649" description="Elongation factor Tu">
    <location>
        <begin position="1"/>
        <end position="397"/>
    </location>
</feature>
<feature type="domain" description="tr-type G">
    <location>
        <begin position="10"/>
        <end position="207"/>
    </location>
</feature>
<feature type="region of interest" description="G1" evidence="1">
    <location>
        <begin position="19"/>
        <end position="26"/>
    </location>
</feature>
<feature type="region of interest" description="G2" evidence="1">
    <location>
        <begin position="60"/>
        <end position="64"/>
    </location>
</feature>
<feature type="region of interest" description="G3" evidence="1">
    <location>
        <begin position="81"/>
        <end position="84"/>
    </location>
</feature>
<feature type="region of interest" description="G4" evidence="1">
    <location>
        <begin position="136"/>
        <end position="139"/>
    </location>
</feature>
<feature type="region of interest" description="G5" evidence="1">
    <location>
        <begin position="174"/>
        <end position="176"/>
    </location>
</feature>
<feature type="binding site" evidence="2">
    <location>
        <begin position="19"/>
        <end position="26"/>
    </location>
    <ligand>
        <name>GTP</name>
        <dbReference type="ChEBI" id="CHEBI:37565"/>
    </ligand>
</feature>
<feature type="binding site" evidence="2">
    <location>
        <position position="26"/>
    </location>
    <ligand>
        <name>Mg(2+)</name>
        <dbReference type="ChEBI" id="CHEBI:18420"/>
    </ligand>
</feature>
<feature type="binding site" evidence="2">
    <location>
        <begin position="81"/>
        <end position="85"/>
    </location>
    <ligand>
        <name>GTP</name>
        <dbReference type="ChEBI" id="CHEBI:37565"/>
    </ligand>
</feature>
<feature type="binding site" evidence="2">
    <location>
        <begin position="136"/>
        <end position="139"/>
    </location>
    <ligand>
        <name>GTP</name>
        <dbReference type="ChEBI" id="CHEBI:37565"/>
    </ligand>
</feature>
<reference key="1">
    <citation type="journal article" date="2011" name="J. Bacteriol.">
        <title>Complete genome sequence and updated annotation of Desulfovibrio alaskensis G20.</title>
        <authorList>
            <person name="Hauser L.J."/>
            <person name="Land M.L."/>
            <person name="Brown S.D."/>
            <person name="Larimer F."/>
            <person name="Keller K.L."/>
            <person name="Rapp-Giles B.J."/>
            <person name="Price M.N."/>
            <person name="Lin M."/>
            <person name="Bruce D.C."/>
            <person name="Detter J.C."/>
            <person name="Tapia R."/>
            <person name="Han C.S."/>
            <person name="Goodwin L.A."/>
            <person name="Cheng J.F."/>
            <person name="Pitluck S."/>
            <person name="Copeland A."/>
            <person name="Lucas S."/>
            <person name="Nolan M."/>
            <person name="Lapidus A.L."/>
            <person name="Palumbo A.V."/>
            <person name="Wall J.D."/>
        </authorList>
    </citation>
    <scope>NUCLEOTIDE SEQUENCE [LARGE SCALE GENOMIC DNA]</scope>
    <source>
        <strain>ATCC BAA-1058 / DSM 17464 / G20</strain>
    </source>
</reference>